<organism>
    <name type="scientific">Trichormus variabilis (strain ATCC 29413 / PCC 7937)</name>
    <name type="common">Anabaena variabilis</name>
    <dbReference type="NCBI Taxonomy" id="240292"/>
    <lineage>
        <taxon>Bacteria</taxon>
        <taxon>Bacillati</taxon>
        <taxon>Cyanobacteriota</taxon>
        <taxon>Cyanophyceae</taxon>
        <taxon>Nostocales</taxon>
        <taxon>Nostocaceae</taxon>
        <taxon>Trichormus</taxon>
    </lineage>
</organism>
<accession>Q3MFB6</accession>
<reference key="1">
    <citation type="journal article" date="2014" name="Stand. Genomic Sci.">
        <title>Complete genome sequence of Anabaena variabilis ATCC 29413.</title>
        <authorList>
            <person name="Thiel T."/>
            <person name="Pratte B.S."/>
            <person name="Zhong J."/>
            <person name="Goodwin L."/>
            <person name="Copeland A."/>
            <person name="Lucas S."/>
            <person name="Han C."/>
            <person name="Pitluck S."/>
            <person name="Land M.L."/>
            <person name="Kyrpides N.C."/>
            <person name="Woyke T."/>
        </authorList>
    </citation>
    <scope>NUCLEOTIDE SEQUENCE [LARGE SCALE GENOMIC DNA]</scope>
    <source>
        <strain>ATCC 29413 / PCC 7937</strain>
    </source>
</reference>
<gene>
    <name evidence="1" type="primary">rplV</name>
    <name evidence="1" type="synonym">rpl22</name>
    <name type="ordered locus">Ava_0696</name>
</gene>
<keyword id="KW-0687">Ribonucleoprotein</keyword>
<keyword id="KW-0689">Ribosomal protein</keyword>
<keyword id="KW-0694">RNA-binding</keyword>
<keyword id="KW-0699">rRNA-binding</keyword>
<comment type="function">
    <text evidence="1">This protein binds specifically to 23S rRNA; its binding is stimulated by other ribosomal proteins, e.g. L4, L17, and L20. It is important during the early stages of 50S assembly. It makes multiple contacts with different domains of the 23S rRNA in the assembled 50S subunit and ribosome (By similarity).</text>
</comment>
<comment type="function">
    <text evidence="1">The globular domain of the protein is located near the polypeptide exit tunnel on the outside of the subunit, while an extended beta-hairpin is found that lines the wall of the exit tunnel in the center of the 70S ribosome.</text>
</comment>
<comment type="subunit">
    <text evidence="1">Part of the 50S ribosomal subunit.</text>
</comment>
<comment type="similarity">
    <text evidence="1">Belongs to the universal ribosomal protein uL22 family.</text>
</comment>
<proteinExistence type="inferred from homology"/>
<sequence>MATDTTEVKAIARFIRMSPYKVRRVLDQIRGLSYREALIILEFMPYRATEPVLTLLRSAAANAEHNAGLDRAELVITQAYADQGPVLKRFQPRAQGRAYQIRKPTCHITLAVAANAGAK</sequence>
<protein>
    <recommendedName>
        <fullName evidence="1">Large ribosomal subunit protein uL22</fullName>
    </recommendedName>
    <alternativeName>
        <fullName evidence="2">50S ribosomal protein L22</fullName>
    </alternativeName>
</protein>
<evidence type="ECO:0000255" key="1">
    <source>
        <dbReference type="HAMAP-Rule" id="MF_01331"/>
    </source>
</evidence>
<evidence type="ECO:0000305" key="2"/>
<name>RL22_TRIV2</name>
<feature type="chain" id="PRO_0000243111" description="Large ribosomal subunit protein uL22">
    <location>
        <begin position="1"/>
        <end position="119"/>
    </location>
</feature>
<dbReference type="EMBL" id="CP000117">
    <property type="protein sequence ID" value="ABA20320.1"/>
    <property type="molecule type" value="Genomic_DNA"/>
</dbReference>
<dbReference type="RefSeq" id="WP_010998348.1">
    <property type="nucleotide sequence ID" value="NC_007413.1"/>
</dbReference>
<dbReference type="SMR" id="Q3MFB6"/>
<dbReference type="STRING" id="240292.Ava_0696"/>
<dbReference type="GeneID" id="58723354"/>
<dbReference type="KEGG" id="ava:Ava_0696"/>
<dbReference type="eggNOG" id="COG0091">
    <property type="taxonomic scope" value="Bacteria"/>
</dbReference>
<dbReference type="HOGENOM" id="CLU_083987_3_2_3"/>
<dbReference type="Proteomes" id="UP000002533">
    <property type="component" value="Chromosome"/>
</dbReference>
<dbReference type="GO" id="GO:0022625">
    <property type="term" value="C:cytosolic large ribosomal subunit"/>
    <property type="evidence" value="ECO:0007669"/>
    <property type="project" value="TreeGrafter"/>
</dbReference>
<dbReference type="GO" id="GO:0019843">
    <property type="term" value="F:rRNA binding"/>
    <property type="evidence" value="ECO:0007669"/>
    <property type="project" value="UniProtKB-UniRule"/>
</dbReference>
<dbReference type="GO" id="GO:0003735">
    <property type="term" value="F:structural constituent of ribosome"/>
    <property type="evidence" value="ECO:0007669"/>
    <property type="project" value="InterPro"/>
</dbReference>
<dbReference type="GO" id="GO:0006412">
    <property type="term" value="P:translation"/>
    <property type="evidence" value="ECO:0007669"/>
    <property type="project" value="UniProtKB-UniRule"/>
</dbReference>
<dbReference type="CDD" id="cd00336">
    <property type="entry name" value="Ribosomal_L22"/>
    <property type="match status" value="1"/>
</dbReference>
<dbReference type="FunFam" id="3.90.470.10:FF:000004">
    <property type="entry name" value="50S ribosomal protein L22, chloroplastic"/>
    <property type="match status" value="1"/>
</dbReference>
<dbReference type="Gene3D" id="3.90.470.10">
    <property type="entry name" value="Ribosomal protein L22/L17"/>
    <property type="match status" value="1"/>
</dbReference>
<dbReference type="HAMAP" id="MF_01331_B">
    <property type="entry name" value="Ribosomal_uL22_B"/>
    <property type="match status" value="1"/>
</dbReference>
<dbReference type="InterPro" id="IPR001063">
    <property type="entry name" value="Ribosomal_uL22"/>
</dbReference>
<dbReference type="InterPro" id="IPR005727">
    <property type="entry name" value="Ribosomal_uL22_bac/chlpt-type"/>
</dbReference>
<dbReference type="InterPro" id="IPR047867">
    <property type="entry name" value="Ribosomal_uL22_bac/org-type"/>
</dbReference>
<dbReference type="InterPro" id="IPR018260">
    <property type="entry name" value="Ribosomal_uL22_CS"/>
</dbReference>
<dbReference type="InterPro" id="IPR036394">
    <property type="entry name" value="Ribosomal_uL22_sf"/>
</dbReference>
<dbReference type="NCBIfam" id="TIGR01044">
    <property type="entry name" value="rplV_bact"/>
    <property type="match status" value="1"/>
</dbReference>
<dbReference type="PANTHER" id="PTHR13501">
    <property type="entry name" value="CHLOROPLAST 50S RIBOSOMAL PROTEIN L22-RELATED"/>
    <property type="match status" value="1"/>
</dbReference>
<dbReference type="PANTHER" id="PTHR13501:SF8">
    <property type="entry name" value="LARGE RIBOSOMAL SUBUNIT PROTEIN UL22M"/>
    <property type="match status" value="1"/>
</dbReference>
<dbReference type="Pfam" id="PF00237">
    <property type="entry name" value="Ribosomal_L22"/>
    <property type="match status" value="1"/>
</dbReference>
<dbReference type="SUPFAM" id="SSF54843">
    <property type="entry name" value="Ribosomal protein L22"/>
    <property type="match status" value="1"/>
</dbReference>
<dbReference type="PROSITE" id="PS00464">
    <property type="entry name" value="RIBOSOMAL_L22"/>
    <property type="match status" value="1"/>
</dbReference>